<reference key="1">
    <citation type="journal article" date="2005" name="PLoS Genet.">
        <title>Life in hot carbon monoxide: the complete genome sequence of Carboxydothermus hydrogenoformans Z-2901.</title>
        <authorList>
            <person name="Wu M."/>
            <person name="Ren Q."/>
            <person name="Durkin A.S."/>
            <person name="Daugherty S.C."/>
            <person name="Brinkac L.M."/>
            <person name="Dodson R.J."/>
            <person name="Madupu R."/>
            <person name="Sullivan S.A."/>
            <person name="Kolonay J.F."/>
            <person name="Nelson W.C."/>
            <person name="Tallon L.J."/>
            <person name="Jones K.M."/>
            <person name="Ulrich L.E."/>
            <person name="Gonzalez J.M."/>
            <person name="Zhulin I.B."/>
            <person name="Robb F.T."/>
            <person name="Eisen J.A."/>
        </authorList>
    </citation>
    <scope>NUCLEOTIDE SEQUENCE [LARGE SCALE GENOMIC DNA]</scope>
    <source>
        <strain>ATCC BAA-161 / DSM 6008 / Z-2901</strain>
    </source>
</reference>
<keyword id="KW-0067">ATP-binding</keyword>
<keyword id="KW-0963">Cytoplasm</keyword>
<keyword id="KW-1015">Disulfide bond</keyword>
<keyword id="KW-0547">Nucleotide-binding</keyword>
<keyword id="KW-1185">Reference proteome</keyword>
<keyword id="KW-0694">RNA-binding</keyword>
<keyword id="KW-0808">Transferase</keyword>
<keyword id="KW-0819">tRNA processing</keyword>
<keyword id="KW-0820">tRNA-binding</keyword>
<evidence type="ECO:0000255" key="1">
    <source>
        <dbReference type="HAMAP-Rule" id="MF_00144"/>
    </source>
</evidence>
<name>MNMA_CARHZ</name>
<proteinExistence type="inferred from homology"/>
<organism>
    <name type="scientific">Carboxydothermus hydrogenoformans (strain ATCC BAA-161 / DSM 6008 / Z-2901)</name>
    <dbReference type="NCBI Taxonomy" id="246194"/>
    <lineage>
        <taxon>Bacteria</taxon>
        <taxon>Bacillati</taxon>
        <taxon>Bacillota</taxon>
        <taxon>Clostridia</taxon>
        <taxon>Thermoanaerobacterales</taxon>
        <taxon>Thermoanaerobacteraceae</taxon>
        <taxon>Carboxydothermus</taxon>
    </lineage>
</organism>
<sequence length="365" mass="41650">MDVIGRKKVLVAMSGGVDSSVTAALLLEQGYEVVGVTMQIWDPKIEVIGEEYVGCCSIYAVNDARRVADRLGIPYYVLNFRELFERKVIDYFTEEYLRGRTPNPCIACNRYIKFDALLKKALSLGMDYMATGHYARVVYKDDIGKYGLFRGVDRKKDQTYVLYNLTQDMLRRLLLPLGEYTKEQVRELARKYNLVTADKPESQEICFVPDNDYRKFLKERRGEEIKPGNFVDVNGRVLGQHQGYPYYTIGQRKGLGLALGKPYYVVDIRPETNEVVIGEASEIFSPGLIASDLNFLWFDEIPERFEAQAQIRYNAKPQPAVVERIGKDKVKVVFNEPQRAITPGQAVVFYRGDELLGGGTIEKRL</sequence>
<feature type="chain" id="PRO_0000349572" description="tRNA-specific 2-thiouridylase MnmA">
    <location>
        <begin position="1"/>
        <end position="365"/>
    </location>
</feature>
<feature type="region of interest" description="Interaction with tRNA" evidence="1">
    <location>
        <begin position="156"/>
        <end position="158"/>
    </location>
</feature>
<feature type="region of interest" description="Interaction with tRNA" evidence="1">
    <location>
        <begin position="312"/>
        <end position="313"/>
    </location>
</feature>
<feature type="active site" description="Nucleophile" evidence="1">
    <location>
        <position position="108"/>
    </location>
</feature>
<feature type="active site" description="Cysteine persulfide intermediate" evidence="1">
    <location>
        <position position="206"/>
    </location>
</feature>
<feature type="binding site" evidence="1">
    <location>
        <begin position="12"/>
        <end position="19"/>
    </location>
    <ligand>
        <name>ATP</name>
        <dbReference type="ChEBI" id="CHEBI:30616"/>
    </ligand>
</feature>
<feature type="binding site" evidence="1">
    <location>
        <position position="38"/>
    </location>
    <ligand>
        <name>ATP</name>
        <dbReference type="ChEBI" id="CHEBI:30616"/>
    </ligand>
</feature>
<feature type="binding site" evidence="1">
    <location>
        <position position="132"/>
    </location>
    <ligand>
        <name>ATP</name>
        <dbReference type="ChEBI" id="CHEBI:30616"/>
    </ligand>
</feature>
<feature type="site" description="Interaction with tRNA" evidence="1">
    <location>
        <position position="133"/>
    </location>
</feature>
<feature type="site" description="Interaction with tRNA" evidence="1">
    <location>
        <position position="345"/>
    </location>
</feature>
<feature type="disulfide bond" description="Alternate" evidence="1">
    <location>
        <begin position="108"/>
        <end position="206"/>
    </location>
</feature>
<gene>
    <name evidence="1" type="primary">mnmA</name>
    <name type="ordered locus">CHY_2197</name>
</gene>
<protein>
    <recommendedName>
        <fullName evidence="1">tRNA-specific 2-thiouridylase MnmA</fullName>
        <ecNumber evidence="1">2.8.1.13</ecNumber>
    </recommendedName>
</protein>
<accession>Q3AA24</accession>
<dbReference type="EC" id="2.8.1.13" evidence="1"/>
<dbReference type="EMBL" id="CP000141">
    <property type="protein sequence ID" value="ABB14184.1"/>
    <property type="molecule type" value="Genomic_DNA"/>
</dbReference>
<dbReference type="RefSeq" id="WP_011345083.1">
    <property type="nucleotide sequence ID" value="NC_007503.1"/>
</dbReference>
<dbReference type="SMR" id="Q3AA24"/>
<dbReference type="FunCoup" id="Q3AA24">
    <property type="interactions" value="425"/>
</dbReference>
<dbReference type="STRING" id="246194.CHY_2197"/>
<dbReference type="KEGG" id="chy:CHY_2197"/>
<dbReference type="eggNOG" id="COG0482">
    <property type="taxonomic scope" value="Bacteria"/>
</dbReference>
<dbReference type="HOGENOM" id="CLU_035188_0_0_9"/>
<dbReference type="InParanoid" id="Q3AA24"/>
<dbReference type="OrthoDB" id="9800696at2"/>
<dbReference type="Proteomes" id="UP000002706">
    <property type="component" value="Chromosome"/>
</dbReference>
<dbReference type="GO" id="GO:0005737">
    <property type="term" value="C:cytoplasm"/>
    <property type="evidence" value="ECO:0007669"/>
    <property type="project" value="UniProtKB-SubCell"/>
</dbReference>
<dbReference type="GO" id="GO:0005524">
    <property type="term" value="F:ATP binding"/>
    <property type="evidence" value="ECO:0007669"/>
    <property type="project" value="UniProtKB-KW"/>
</dbReference>
<dbReference type="GO" id="GO:0000049">
    <property type="term" value="F:tRNA binding"/>
    <property type="evidence" value="ECO:0007669"/>
    <property type="project" value="UniProtKB-KW"/>
</dbReference>
<dbReference type="GO" id="GO:0103016">
    <property type="term" value="F:tRNA-uridine 2-sulfurtransferase activity"/>
    <property type="evidence" value="ECO:0007669"/>
    <property type="project" value="UniProtKB-EC"/>
</dbReference>
<dbReference type="GO" id="GO:0002143">
    <property type="term" value="P:tRNA wobble position uridine thiolation"/>
    <property type="evidence" value="ECO:0007669"/>
    <property type="project" value="TreeGrafter"/>
</dbReference>
<dbReference type="CDD" id="cd01998">
    <property type="entry name" value="MnmA_TRMU-like"/>
    <property type="match status" value="1"/>
</dbReference>
<dbReference type="FunFam" id="2.30.30.280:FF:000001">
    <property type="entry name" value="tRNA-specific 2-thiouridylase MnmA"/>
    <property type="match status" value="1"/>
</dbReference>
<dbReference type="FunFam" id="2.40.30.10:FF:000023">
    <property type="entry name" value="tRNA-specific 2-thiouridylase MnmA"/>
    <property type="match status" value="1"/>
</dbReference>
<dbReference type="FunFam" id="3.40.50.620:FF:000115">
    <property type="entry name" value="tRNA-specific 2-thiouridylase MnmA"/>
    <property type="match status" value="1"/>
</dbReference>
<dbReference type="Gene3D" id="2.30.30.280">
    <property type="entry name" value="Adenine nucleotide alpha hydrolases-like domains"/>
    <property type="match status" value="1"/>
</dbReference>
<dbReference type="Gene3D" id="3.40.50.620">
    <property type="entry name" value="HUPs"/>
    <property type="match status" value="1"/>
</dbReference>
<dbReference type="Gene3D" id="2.40.30.10">
    <property type="entry name" value="Translation factors"/>
    <property type="match status" value="1"/>
</dbReference>
<dbReference type="HAMAP" id="MF_00144">
    <property type="entry name" value="tRNA_thiouridyl_MnmA"/>
    <property type="match status" value="1"/>
</dbReference>
<dbReference type="InterPro" id="IPR004506">
    <property type="entry name" value="MnmA-like"/>
</dbReference>
<dbReference type="InterPro" id="IPR046885">
    <property type="entry name" value="MnmA-like_C"/>
</dbReference>
<dbReference type="InterPro" id="IPR046884">
    <property type="entry name" value="MnmA-like_central"/>
</dbReference>
<dbReference type="InterPro" id="IPR023382">
    <property type="entry name" value="MnmA-like_central_sf"/>
</dbReference>
<dbReference type="InterPro" id="IPR014729">
    <property type="entry name" value="Rossmann-like_a/b/a_fold"/>
</dbReference>
<dbReference type="NCBIfam" id="NF001138">
    <property type="entry name" value="PRK00143.1"/>
    <property type="match status" value="1"/>
</dbReference>
<dbReference type="NCBIfam" id="TIGR00420">
    <property type="entry name" value="trmU"/>
    <property type="match status" value="1"/>
</dbReference>
<dbReference type="PANTHER" id="PTHR11933:SF5">
    <property type="entry name" value="MITOCHONDRIAL TRNA-SPECIFIC 2-THIOURIDYLASE 1"/>
    <property type="match status" value="1"/>
</dbReference>
<dbReference type="PANTHER" id="PTHR11933">
    <property type="entry name" value="TRNA 5-METHYLAMINOMETHYL-2-THIOURIDYLATE -METHYLTRANSFERASE"/>
    <property type="match status" value="1"/>
</dbReference>
<dbReference type="Pfam" id="PF03054">
    <property type="entry name" value="tRNA_Me_trans"/>
    <property type="match status" value="1"/>
</dbReference>
<dbReference type="Pfam" id="PF20258">
    <property type="entry name" value="tRNA_Me_trans_C"/>
    <property type="match status" value="1"/>
</dbReference>
<dbReference type="Pfam" id="PF20259">
    <property type="entry name" value="tRNA_Me_trans_M"/>
    <property type="match status" value="1"/>
</dbReference>
<dbReference type="SUPFAM" id="SSF52402">
    <property type="entry name" value="Adenine nucleotide alpha hydrolases-like"/>
    <property type="match status" value="1"/>
</dbReference>
<comment type="function">
    <text evidence="1">Catalyzes the 2-thiolation of uridine at the wobble position (U34) of tRNA, leading to the formation of s(2)U34.</text>
</comment>
<comment type="catalytic activity">
    <reaction evidence="1">
        <text>S-sulfanyl-L-cysteinyl-[protein] + uridine(34) in tRNA + AH2 + ATP = 2-thiouridine(34) in tRNA + L-cysteinyl-[protein] + A + AMP + diphosphate + H(+)</text>
        <dbReference type="Rhea" id="RHEA:47032"/>
        <dbReference type="Rhea" id="RHEA-COMP:10131"/>
        <dbReference type="Rhea" id="RHEA-COMP:11726"/>
        <dbReference type="Rhea" id="RHEA-COMP:11727"/>
        <dbReference type="Rhea" id="RHEA-COMP:11728"/>
        <dbReference type="ChEBI" id="CHEBI:13193"/>
        <dbReference type="ChEBI" id="CHEBI:15378"/>
        <dbReference type="ChEBI" id="CHEBI:17499"/>
        <dbReference type="ChEBI" id="CHEBI:29950"/>
        <dbReference type="ChEBI" id="CHEBI:30616"/>
        <dbReference type="ChEBI" id="CHEBI:33019"/>
        <dbReference type="ChEBI" id="CHEBI:61963"/>
        <dbReference type="ChEBI" id="CHEBI:65315"/>
        <dbReference type="ChEBI" id="CHEBI:87170"/>
        <dbReference type="ChEBI" id="CHEBI:456215"/>
        <dbReference type="EC" id="2.8.1.13"/>
    </reaction>
</comment>
<comment type="subcellular location">
    <subcellularLocation>
        <location evidence="1">Cytoplasm</location>
    </subcellularLocation>
</comment>
<comment type="similarity">
    <text evidence="1">Belongs to the MnmA/TRMU family.</text>
</comment>